<reference key="1">
    <citation type="journal article" date="2009" name="Proc. Natl. Acad. Sci. U.S.A.">
        <title>The genomic basis of trophic strategy in marine bacteria.</title>
        <authorList>
            <person name="Lauro F.M."/>
            <person name="McDougald D."/>
            <person name="Thomas T."/>
            <person name="Williams T.J."/>
            <person name="Egan S."/>
            <person name="Rice S."/>
            <person name="DeMaere M.Z."/>
            <person name="Ting L."/>
            <person name="Ertan H."/>
            <person name="Johnson J."/>
            <person name="Ferriera S."/>
            <person name="Lapidus A."/>
            <person name="Anderson I."/>
            <person name="Kyrpides N."/>
            <person name="Munk A.C."/>
            <person name="Detter C."/>
            <person name="Han C.S."/>
            <person name="Brown M.V."/>
            <person name="Robb F.T."/>
            <person name="Kjelleberg S."/>
            <person name="Cavicchioli R."/>
        </authorList>
    </citation>
    <scope>NUCLEOTIDE SEQUENCE [LARGE SCALE GENOMIC DNA]</scope>
    <source>
        <strain>DSM 13593 / LMG 18877 / RB2256</strain>
    </source>
</reference>
<feature type="chain" id="PRO_0000267951" description="Large ribosomal subunit protein bL17">
    <location>
        <begin position="1"/>
        <end position="139"/>
    </location>
</feature>
<protein>
    <recommendedName>
        <fullName evidence="1">Large ribosomal subunit protein bL17</fullName>
    </recommendedName>
    <alternativeName>
        <fullName evidence="2">50S ribosomal protein L17</fullName>
    </alternativeName>
</protein>
<organism>
    <name type="scientific">Sphingopyxis alaskensis (strain DSM 13593 / LMG 18877 / RB2256)</name>
    <name type="common">Sphingomonas alaskensis</name>
    <dbReference type="NCBI Taxonomy" id="317655"/>
    <lineage>
        <taxon>Bacteria</taxon>
        <taxon>Pseudomonadati</taxon>
        <taxon>Pseudomonadota</taxon>
        <taxon>Alphaproteobacteria</taxon>
        <taxon>Sphingomonadales</taxon>
        <taxon>Sphingomonadaceae</taxon>
        <taxon>Sphingopyxis</taxon>
    </lineage>
</organism>
<gene>
    <name evidence="1" type="primary">rplQ</name>
    <name type="ordered locus">Sala_0564</name>
</gene>
<sequence>MRHKSGGRKLQRTSAHRTAMFRNMSASLIKHEQITTTVAKAKELRPYVEKLVTLAKRGGLANRRLAMSRLMDEAQLAKLFDVLAARYKDRNGGYTRIIKAGIRASDAAPIAIIEFVDRDMGAKGQDSGPVTTDEELEDA</sequence>
<evidence type="ECO:0000255" key="1">
    <source>
        <dbReference type="HAMAP-Rule" id="MF_01368"/>
    </source>
</evidence>
<evidence type="ECO:0000305" key="2"/>
<proteinExistence type="inferred from homology"/>
<keyword id="KW-1185">Reference proteome</keyword>
<keyword id="KW-0687">Ribonucleoprotein</keyword>
<keyword id="KW-0689">Ribosomal protein</keyword>
<name>RL17_SPHAL</name>
<comment type="subunit">
    <text evidence="1">Part of the 50S ribosomal subunit. Contacts protein L32.</text>
</comment>
<comment type="similarity">
    <text evidence="1">Belongs to the bacterial ribosomal protein bL17 family.</text>
</comment>
<dbReference type="EMBL" id="CP000356">
    <property type="protein sequence ID" value="ABF52285.1"/>
    <property type="molecule type" value="Genomic_DNA"/>
</dbReference>
<dbReference type="RefSeq" id="WP_011540876.1">
    <property type="nucleotide sequence ID" value="NC_008048.1"/>
</dbReference>
<dbReference type="SMR" id="Q1GVN7"/>
<dbReference type="STRING" id="317655.Sala_0564"/>
<dbReference type="KEGG" id="sal:Sala_0564"/>
<dbReference type="eggNOG" id="COG0203">
    <property type="taxonomic scope" value="Bacteria"/>
</dbReference>
<dbReference type="HOGENOM" id="CLU_074407_2_0_5"/>
<dbReference type="OrthoDB" id="9809073at2"/>
<dbReference type="Proteomes" id="UP000006578">
    <property type="component" value="Chromosome"/>
</dbReference>
<dbReference type="GO" id="GO:0022625">
    <property type="term" value="C:cytosolic large ribosomal subunit"/>
    <property type="evidence" value="ECO:0007669"/>
    <property type="project" value="TreeGrafter"/>
</dbReference>
<dbReference type="GO" id="GO:0003735">
    <property type="term" value="F:structural constituent of ribosome"/>
    <property type="evidence" value="ECO:0007669"/>
    <property type="project" value="InterPro"/>
</dbReference>
<dbReference type="GO" id="GO:0006412">
    <property type="term" value="P:translation"/>
    <property type="evidence" value="ECO:0007669"/>
    <property type="project" value="UniProtKB-UniRule"/>
</dbReference>
<dbReference type="FunFam" id="3.90.1030.10:FF:000001">
    <property type="entry name" value="50S ribosomal protein L17"/>
    <property type="match status" value="1"/>
</dbReference>
<dbReference type="Gene3D" id="3.90.1030.10">
    <property type="entry name" value="Ribosomal protein L17"/>
    <property type="match status" value="1"/>
</dbReference>
<dbReference type="HAMAP" id="MF_01368">
    <property type="entry name" value="Ribosomal_bL17"/>
    <property type="match status" value="1"/>
</dbReference>
<dbReference type="InterPro" id="IPR000456">
    <property type="entry name" value="Ribosomal_bL17"/>
</dbReference>
<dbReference type="InterPro" id="IPR047859">
    <property type="entry name" value="Ribosomal_bL17_CS"/>
</dbReference>
<dbReference type="InterPro" id="IPR036373">
    <property type="entry name" value="Ribosomal_bL17_sf"/>
</dbReference>
<dbReference type="NCBIfam" id="TIGR00059">
    <property type="entry name" value="L17"/>
    <property type="match status" value="1"/>
</dbReference>
<dbReference type="PANTHER" id="PTHR14413:SF16">
    <property type="entry name" value="LARGE RIBOSOMAL SUBUNIT PROTEIN BL17M"/>
    <property type="match status" value="1"/>
</dbReference>
<dbReference type="PANTHER" id="PTHR14413">
    <property type="entry name" value="RIBOSOMAL PROTEIN L17"/>
    <property type="match status" value="1"/>
</dbReference>
<dbReference type="Pfam" id="PF01196">
    <property type="entry name" value="Ribosomal_L17"/>
    <property type="match status" value="1"/>
</dbReference>
<dbReference type="SUPFAM" id="SSF64263">
    <property type="entry name" value="Prokaryotic ribosomal protein L17"/>
    <property type="match status" value="1"/>
</dbReference>
<dbReference type="PROSITE" id="PS01167">
    <property type="entry name" value="RIBOSOMAL_L17"/>
    <property type="match status" value="1"/>
</dbReference>
<accession>Q1GVN7</accession>